<feature type="initiator methionine" description="Removed" evidence="1">
    <location>
        <position position="1"/>
    </location>
</feature>
<feature type="chain" id="PRO_0000135306" description="Glutamine--fructose-6-phosphate aminotransferase [isomerizing]">
    <location>
        <begin position="2"/>
        <end position="610"/>
    </location>
</feature>
<feature type="domain" description="Glutamine amidotransferase type-2" evidence="1">
    <location>
        <begin position="2"/>
        <end position="221"/>
    </location>
</feature>
<feature type="domain" description="SIS 1" evidence="1">
    <location>
        <begin position="286"/>
        <end position="426"/>
    </location>
</feature>
<feature type="domain" description="SIS 2" evidence="1">
    <location>
        <begin position="459"/>
        <end position="600"/>
    </location>
</feature>
<feature type="active site" description="Nucleophile; for GATase activity" evidence="1">
    <location>
        <position position="2"/>
    </location>
</feature>
<feature type="active site" description="For Fru-6P isomerization activity" evidence="1">
    <location>
        <position position="605"/>
    </location>
</feature>
<evidence type="ECO:0000255" key="1">
    <source>
        <dbReference type="HAMAP-Rule" id="MF_00164"/>
    </source>
</evidence>
<protein>
    <recommendedName>
        <fullName evidence="1">Glutamine--fructose-6-phosphate aminotransferase [isomerizing]</fullName>
        <ecNumber evidence="1">2.6.1.16</ecNumber>
    </recommendedName>
    <alternativeName>
        <fullName evidence="1">D-fructose-6-phosphate amidotransferase</fullName>
    </alternativeName>
    <alternativeName>
        <fullName evidence="1">GFAT</fullName>
    </alternativeName>
    <alternativeName>
        <fullName evidence="1">Glucosamine-6-phosphate synthase</fullName>
    </alternativeName>
    <alternativeName>
        <fullName evidence="1">Hexosephosphate aminotransferase</fullName>
    </alternativeName>
    <alternativeName>
        <fullName evidence="1">L-glutamine--D-fructose-6-phosphate amidotransferase</fullName>
    </alternativeName>
</protein>
<comment type="function">
    <text evidence="1">Catalyzes the first step in hexosamine metabolism, converting fructose-6P into glucosamine-6P using glutamine as a nitrogen source.</text>
</comment>
<comment type="catalytic activity">
    <reaction evidence="1">
        <text>D-fructose 6-phosphate + L-glutamine = D-glucosamine 6-phosphate + L-glutamate</text>
        <dbReference type="Rhea" id="RHEA:13237"/>
        <dbReference type="ChEBI" id="CHEBI:29985"/>
        <dbReference type="ChEBI" id="CHEBI:58359"/>
        <dbReference type="ChEBI" id="CHEBI:58725"/>
        <dbReference type="ChEBI" id="CHEBI:61527"/>
        <dbReference type="EC" id="2.6.1.16"/>
    </reaction>
</comment>
<comment type="subunit">
    <text evidence="1">Homodimer.</text>
</comment>
<comment type="subcellular location">
    <subcellularLocation>
        <location evidence="1">Cytoplasm</location>
    </subcellularLocation>
</comment>
<name>GLMS_BORPE</name>
<proteinExistence type="inferred from homology"/>
<organism>
    <name type="scientific">Bordetella pertussis (strain Tohama I / ATCC BAA-589 / NCTC 13251)</name>
    <dbReference type="NCBI Taxonomy" id="257313"/>
    <lineage>
        <taxon>Bacteria</taxon>
        <taxon>Pseudomonadati</taxon>
        <taxon>Pseudomonadota</taxon>
        <taxon>Betaproteobacteria</taxon>
        <taxon>Burkholderiales</taxon>
        <taxon>Alcaligenaceae</taxon>
        <taxon>Bordetella</taxon>
    </lineage>
</organism>
<dbReference type="EC" id="2.6.1.16" evidence="1"/>
<dbReference type="EMBL" id="BX640412">
    <property type="protein sequence ID" value="CAE44992.1"/>
    <property type="molecule type" value="Genomic_DNA"/>
</dbReference>
<dbReference type="RefSeq" id="NP_879503.1">
    <property type="nucleotide sequence ID" value="NC_002929.2"/>
</dbReference>
<dbReference type="RefSeq" id="WP_010929946.1">
    <property type="nucleotide sequence ID" value="NZ_CP039022.1"/>
</dbReference>
<dbReference type="SMR" id="Q7VRZ3"/>
<dbReference type="STRING" id="257313.BP0666"/>
<dbReference type="PaxDb" id="257313-BP0666"/>
<dbReference type="GeneID" id="69603299"/>
<dbReference type="KEGG" id="bpe:BP0666"/>
<dbReference type="PATRIC" id="fig|257313.5.peg.713"/>
<dbReference type="eggNOG" id="COG0449">
    <property type="taxonomic scope" value="Bacteria"/>
</dbReference>
<dbReference type="HOGENOM" id="CLU_012520_5_2_4"/>
<dbReference type="Proteomes" id="UP000002676">
    <property type="component" value="Chromosome"/>
</dbReference>
<dbReference type="GO" id="GO:0005829">
    <property type="term" value="C:cytosol"/>
    <property type="evidence" value="ECO:0007669"/>
    <property type="project" value="TreeGrafter"/>
</dbReference>
<dbReference type="GO" id="GO:0097367">
    <property type="term" value="F:carbohydrate derivative binding"/>
    <property type="evidence" value="ECO:0007669"/>
    <property type="project" value="InterPro"/>
</dbReference>
<dbReference type="GO" id="GO:0004360">
    <property type="term" value="F:glutamine-fructose-6-phosphate transaminase (isomerizing) activity"/>
    <property type="evidence" value="ECO:0007669"/>
    <property type="project" value="UniProtKB-UniRule"/>
</dbReference>
<dbReference type="GO" id="GO:0005975">
    <property type="term" value="P:carbohydrate metabolic process"/>
    <property type="evidence" value="ECO:0007669"/>
    <property type="project" value="UniProtKB-UniRule"/>
</dbReference>
<dbReference type="GO" id="GO:0006002">
    <property type="term" value="P:fructose 6-phosphate metabolic process"/>
    <property type="evidence" value="ECO:0007669"/>
    <property type="project" value="TreeGrafter"/>
</dbReference>
<dbReference type="GO" id="GO:0006487">
    <property type="term" value="P:protein N-linked glycosylation"/>
    <property type="evidence" value="ECO:0007669"/>
    <property type="project" value="TreeGrafter"/>
</dbReference>
<dbReference type="GO" id="GO:0006047">
    <property type="term" value="P:UDP-N-acetylglucosamine metabolic process"/>
    <property type="evidence" value="ECO:0007669"/>
    <property type="project" value="TreeGrafter"/>
</dbReference>
<dbReference type="CDD" id="cd00714">
    <property type="entry name" value="GFAT"/>
    <property type="match status" value="1"/>
</dbReference>
<dbReference type="CDD" id="cd05008">
    <property type="entry name" value="SIS_GlmS_GlmD_1"/>
    <property type="match status" value="1"/>
</dbReference>
<dbReference type="CDD" id="cd05009">
    <property type="entry name" value="SIS_GlmS_GlmD_2"/>
    <property type="match status" value="1"/>
</dbReference>
<dbReference type="FunFam" id="3.40.50.10490:FF:000001">
    <property type="entry name" value="Glutamine--fructose-6-phosphate aminotransferase [isomerizing]"/>
    <property type="match status" value="1"/>
</dbReference>
<dbReference type="FunFam" id="3.40.50.10490:FF:000002">
    <property type="entry name" value="Glutamine--fructose-6-phosphate aminotransferase [isomerizing]"/>
    <property type="match status" value="1"/>
</dbReference>
<dbReference type="FunFam" id="3.60.20.10:FF:000006">
    <property type="entry name" value="Glutamine--fructose-6-phosphate aminotransferase [isomerizing]"/>
    <property type="match status" value="1"/>
</dbReference>
<dbReference type="Gene3D" id="3.40.50.10490">
    <property type="entry name" value="Glucose-6-phosphate isomerase like protein, domain 1"/>
    <property type="match status" value="2"/>
</dbReference>
<dbReference type="Gene3D" id="3.60.20.10">
    <property type="entry name" value="Glutamine Phosphoribosylpyrophosphate, subunit 1, domain 1"/>
    <property type="match status" value="1"/>
</dbReference>
<dbReference type="HAMAP" id="MF_00164">
    <property type="entry name" value="GlmS"/>
    <property type="match status" value="1"/>
</dbReference>
<dbReference type="InterPro" id="IPR017932">
    <property type="entry name" value="GATase_2_dom"/>
</dbReference>
<dbReference type="InterPro" id="IPR005855">
    <property type="entry name" value="GFAT"/>
</dbReference>
<dbReference type="InterPro" id="IPR047084">
    <property type="entry name" value="GFAT_N"/>
</dbReference>
<dbReference type="InterPro" id="IPR035466">
    <property type="entry name" value="GlmS/AgaS_SIS"/>
</dbReference>
<dbReference type="InterPro" id="IPR035490">
    <property type="entry name" value="GlmS/FrlB_SIS"/>
</dbReference>
<dbReference type="InterPro" id="IPR029055">
    <property type="entry name" value="Ntn_hydrolases_N"/>
</dbReference>
<dbReference type="InterPro" id="IPR001347">
    <property type="entry name" value="SIS_dom"/>
</dbReference>
<dbReference type="InterPro" id="IPR046348">
    <property type="entry name" value="SIS_dom_sf"/>
</dbReference>
<dbReference type="NCBIfam" id="TIGR01135">
    <property type="entry name" value="glmS"/>
    <property type="match status" value="1"/>
</dbReference>
<dbReference type="NCBIfam" id="NF001484">
    <property type="entry name" value="PRK00331.1"/>
    <property type="match status" value="1"/>
</dbReference>
<dbReference type="PANTHER" id="PTHR10937">
    <property type="entry name" value="GLUCOSAMINE--FRUCTOSE-6-PHOSPHATE AMINOTRANSFERASE, ISOMERIZING"/>
    <property type="match status" value="1"/>
</dbReference>
<dbReference type="PANTHER" id="PTHR10937:SF0">
    <property type="entry name" value="GLUTAMINE--FRUCTOSE-6-PHOSPHATE TRANSAMINASE (ISOMERIZING)"/>
    <property type="match status" value="1"/>
</dbReference>
<dbReference type="Pfam" id="PF13522">
    <property type="entry name" value="GATase_6"/>
    <property type="match status" value="1"/>
</dbReference>
<dbReference type="Pfam" id="PF01380">
    <property type="entry name" value="SIS"/>
    <property type="match status" value="2"/>
</dbReference>
<dbReference type="SUPFAM" id="SSF56235">
    <property type="entry name" value="N-terminal nucleophile aminohydrolases (Ntn hydrolases)"/>
    <property type="match status" value="1"/>
</dbReference>
<dbReference type="SUPFAM" id="SSF53697">
    <property type="entry name" value="SIS domain"/>
    <property type="match status" value="1"/>
</dbReference>
<dbReference type="PROSITE" id="PS51278">
    <property type="entry name" value="GATASE_TYPE_2"/>
    <property type="match status" value="1"/>
</dbReference>
<dbReference type="PROSITE" id="PS51464">
    <property type="entry name" value="SIS"/>
    <property type="match status" value="2"/>
</dbReference>
<keyword id="KW-0032">Aminotransferase</keyword>
<keyword id="KW-0963">Cytoplasm</keyword>
<keyword id="KW-0315">Glutamine amidotransferase</keyword>
<keyword id="KW-1185">Reference proteome</keyword>
<keyword id="KW-0677">Repeat</keyword>
<keyword id="KW-0808">Transferase</keyword>
<sequence>MCGIVGAVAQRDITPILIEGLKRLEYRGYDSCGVALYMDGHLRRTRSTKRVAELSEQVAEDKLGGFTGIAHTRWATHGIPATYNAHPHFSAQGKDEPRIALVHNGIIENHEELRQELQGVGYVFESQTDTEVIAHLVNHLYAGDLFEAVQQAVRRLQGAYAIAVFCRDEPHRVVGARQGSPLVVGLGQNENFLASDALALAGTTDQIIYLEDGDVVDLQLARVWIVDQAGKQVERKAHTVQVHTGAAELGPYRHFMQKEIFEQPRAVGDTLQDIESITPELFGDGAYKVFKEIDSLLILACGTSYYAGLTAKYWIESIARIPVAVEIASEYRYRDSVPNPNALVVTISQSGETADTLAALKHVRSLGMQHTLTVCNVVTSAMVRECELAYITRAGVEIGVASTKAFTTQLTALFLLTLALAQTRGRLTEEQEAEHLKALRHLPAAIGAVLALEPQIMAWADRFASKENALFLGRGMHYPIALEGALKLKEISYIHAEAYPAGELKHGPLALVTEHMPVVTIAPKDALLEKLKSNMQEVRARGGELYVFADADSKIANAEGMHVIRMPEYYGALSPIVHTIPLQLLSYHTACVRGTDVDKPRNLAKSVTVE</sequence>
<gene>
    <name evidence="1" type="primary">glmS</name>
    <name type="ordered locus">BP0666</name>
</gene>
<accession>Q7VRZ3</accession>
<reference key="1">
    <citation type="journal article" date="2003" name="Nat. Genet.">
        <title>Comparative analysis of the genome sequences of Bordetella pertussis, Bordetella parapertussis and Bordetella bronchiseptica.</title>
        <authorList>
            <person name="Parkhill J."/>
            <person name="Sebaihia M."/>
            <person name="Preston A."/>
            <person name="Murphy L.D."/>
            <person name="Thomson N.R."/>
            <person name="Harris D.E."/>
            <person name="Holden M.T.G."/>
            <person name="Churcher C.M."/>
            <person name="Bentley S.D."/>
            <person name="Mungall K.L."/>
            <person name="Cerdeno-Tarraga A.-M."/>
            <person name="Temple L."/>
            <person name="James K.D."/>
            <person name="Harris B."/>
            <person name="Quail M.A."/>
            <person name="Achtman M."/>
            <person name="Atkin R."/>
            <person name="Baker S."/>
            <person name="Basham D."/>
            <person name="Bason N."/>
            <person name="Cherevach I."/>
            <person name="Chillingworth T."/>
            <person name="Collins M."/>
            <person name="Cronin A."/>
            <person name="Davis P."/>
            <person name="Doggett J."/>
            <person name="Feltwell T."/>
            <person name="Goble A."/>
            <person name="Hamlin N."/>
            <person name="Hauser H."/>
            <person name="Holroyd S."/>
            <person name="Jagels K."/>
            <person name="Leather S."/>
            <person name="Moule S."/>
            <person name="Norberczak H."/>
            <person name="O'Neil S."/>
            <person name="Ormond D."/>
            <person name="Price C."/>
            <person name="Rabbinowitsch E."/>
            <person name="Rutter S."/>
            <person name="Sanders M."/>
            <person name="Saunders D."/>
            <person name="Seeger K."/>
            <person name="Sharp S."/>
            <person name="Simmonds M."/>
            <person name="Skelton J."/>
            <person name="Squares R."/>
            <person name="Squares S."/>
            <person name="Stevens K."/>
            <person name="Unwin L."/>
            <person name="Whitehead S."/>
            <person name="Barrell B.G."/>
            <person name="Maskell D.J."/>
        </authorList>
    </citation>
    <scope>NUCLEOTIDE SEQUENCE [LARGE SCALE GENOMIC DNA]</scope>
    <source>
        <strain>Tohama I / ATCC BAA-589 / NCTC 13251</strain>
    </source>
</reference>